<evidence type="ECO:0000255" key="1"/>
<evidence type="ECO:0000303" key="2">
    <source>
    </source>
</evidence>
<evidence type="ECO:0000305" key="3"/>
<evidence type="ECO:0000305" key="4">
    <source>
    </source>
</evidence>
<name>TXG6A_ETHRU</name>
<keyword id="KW-1015">Disulfide bond</keyword>
<keyword id="KW-0964">Secreted</keyword>
<keyword id="KW-0732">Signal</keyword>
<keyword id="KW-0800">Toxin</keyword>
<comment type="subcellular location">
    <subcellularLocation>
        <location evidence="4">Secreted</location>
    </subcellularLocation>
</comment>
<comment type="tissue specificity">
    <text evidence="4">Expressed by the venom gland.</text>
</comment>
<comment type="PTM">
    <text evidence="3">Contains 4 disulfide bonds.</text>
</comment>
<comment type="similarity">
    <text evidence="3">Belongs to the scoloptoxin-16 family.</text>
</comment>
<comment type="caution">
    <text evidence="4">All E.rubripes family members described in 'Undeheim et al., 2014' have not been imported into UniProtKB. Please, refer to this paper to access them.</text>
</comment>
<comment type="online information" name="National Center for Biotechnology Information (NCBI)">
    <link uri="https://www.ncbi.nlm.nih.gov/nuccore/GASI01000144"/>
</comment>
<feature type="signal peptide" evidence="1">
    <location>
        <begin position="1"/>
        <end position="26"/>
    </location>
</feature>
<feature type="chain" id="PRO_0000446813" description="U-scoloptoxin(16)-Er6a" evidence="3">
    <location>
        <begin position="27"/>
        <end position="110"/>
    </location>
</feature>
<protein>
    <recommendedName>
        <fullName evidence="2">U-scoloptoxin(16)-Er6a</fullName>
        <shortName evidence="2">U-SLPTX(16)-Er6a</shortName>
    </recommendedName>
</protein>
<organism>
    <name type="scientific">Ethmostigmus rubripes</name>
    <name type="common">Giant centipede</name>
    <dbReference type="NCBI Taxonomy" id="62613"/>
    <lineage>
        <taxon>Eukaryota</taxon>
        <taxon>Metazoa</taxon>
        <taxon>Ecdysozoa</taxon>
        <taxon>Arthropoda</taxon>
        <taxon>Myriapoda</taxon>
        <taxon>Chilopoda</taxon>
        <taxon>Pleurostigmophora</taxon>
        <taxon>Scolopendromorpha</taxon>
        <taxon>Scolopendridae</taxon>
        <taxon>Ethmostigmus</taxon>
    </lineage>
</organism>
<accession>P0DQC9</accession>
<reference key="1">
    <citation type="journal article" date="2014" name="Mol. Biol. Evol.">
        <title>Clawing through evolution: toxin diversification and convergence in the ancient lineage Chilopoda (centipedes).</title>
        <authorList>
            <person name="Undheim E.A."/>
            <person name="Jones A."/>
            <person name="Clauser K.R."/>
            <person name="Holland J.W."/>
            <person name="Pineda S.S."/>
            <person name="King G.F."/>
            <person name="Fry B.G."/>
        </authorList>
    </citation>
    <scope>NUCLEOTIDE SEQUENCE [MRNA]</scope>
    <scope>NOMENCLATURE</scope>
    <source>
        <tissue>Venom gland</tissue>
    </source>
</reference>
<sequence length="110" mass="11863">MTSTRKLSVSCLIVFMVSSLIAVSSGWLSIGKIAIKDGKCDPKNGNLYAIGEKWYNDEDCFEITCIQGDKGSVAQQVASCPVHAVKPGCELVFPGGTYPKCCPYYECPNS</sequence>
<proteinExistence type="inferred from homology"/>
<dbReference type="SMR" id="P0DQC9"/>
<dbReference type="GO" id="GO:0005576">
    <property type="term" value="C:extracellular region"/>
    <property type="evidence" value="ECO:0007669"/>
    <property type="project" value="UniProtKB-SubCell"/>
</dbReference>
<dbReference type="GO" id="GO:0090729">
    <property type="term" value="F:toxin activity"/>
    <property type="evidence" value="ECO:0007669"/>
    <property type="project" value="UniProtKB-KW"/>
</dbReference>
<dbReference type="InterPro" id="IPR029277">
    <property type="entry name" value="SVWC_dom"/>
</dbReference>
<dbReference type="Pfam" id="PF15430">
    <property type="entry name" value="SVWC"/>
    <property type="match status" value="1"/>
</dbReference>
<dbReference type="SMART" id="SM01318">
    <property type="entry name" value="SVWC"/>
    <property type="match status" value="1"/>
</dbReference>